<protein>
    <recommendedName>
        <fullName evidence="1">Acetyl-coenzyme A carboxylase carboxyl transferase subunit beta</fullName>
        <shortName evidence="1">ACCase subunit beta</shortName>
        <shortName evidence="1">Acetyl-CoA carboxylase carboxyltransferase subunit beta</shortName>
        <ecNumber evidence="1">2.1.3.15</ecNumber>
    </recommendedName>
</protein>
<feature type="chain" id="PRO_0000389849" description="Acetyl-coenzyme A carboxylase carboxyl transferase subunit beta">
    <location>
        <begin position="1"/>
        <end position="285"/>
    </location>
</feature>
<feature type="domain" description="CoA carboxyltransferase N-terminal" evidence="2">
    <location>
        <begin position="29"/>
        <end position="285"/>
    </location>
</feature>
<feature type="zinc finger region" description="C4-type" evidence="1">
    <location>
        <begin position="33"/>
        <end position="55"/>
    </location>
</feature>
<feature type="binding site" evidence="1">
    <location>
        <position position="33"/>
    </location>
    <ligand>
        <name>Zn(2+)</name>
        <dbReference type="ChEBI" id="CHEBI:29105"/>
    </ligand>
</feature>
<feature type="binding site" evidence="1">
    <location>
        <position position="36"/>
    </location>
    <ligand>
        <name>Zn(2+)</name>
        <dbReference type="ChEBI" id="CHEBI:29105"/>
    </ligand>
</feature>
<feature type="binding site" evidence="1">
    <location>
        <position position="52"/>
    </location>
    <ligand>
        <name>Zn(2+)</name>
        <dbReference type="ChEBI" id="CHEBI:29105"/>
    </ligand>
</feature>
<feature type="binding site" evidence="1">
    <location>
        <position position="55"/>
    </location>
    <ligand>
        <name>Zn(2+)</name>
        <dbReference type="ChEBI" id="CHEBI:29105"/>
    </ligand>
</feature>
<dbReference type="EC" id="2.1.3.15" evidence="1"/>
<dbReference type="EMBL" id="CP000736">
    <property type="protein sequence ID" value="ABR52635.1"/>
    <property type="molecule type" value="Genomic_DNA"/>
</dbReference>
<dbReference type="SMR" id="A6U2G7"/>
<dbReference type="KEGG" id="sah:SaurJH1_1791"/>
<dbReference type="HOGENOM" id="CLU_015486_1_0_9"/>
<dbReference type="UniPathway" id="UPA00655">
    <property type="reaction ID" value="UER00711"/>
</dbReference>
<dbReference type="GO" id="GO:0009317">
    <property type="term" value="C:acetyl-CoA carboxylase complex"/>
    <property type="evidence" value="ECO:0007669"/>
    <property type="project" value="InterPro"/>
</dbReference>
<dbReference type="GO" id="GO:0003989">
    <property type="term" value="F:acetyl-CoA carboxylase activity"/>
    <property type="evidence" value="ECO:0007669"/>
    <property type="project" value="InterPro"/>
</dbReference>
<dbReference type="GO" id="GO:0005524">
    <property type="term" value="F:ATP binding"/>
    <property type="evidence" value="ECO:0007669"/>
    <property type="project" value="UniProtKB-KW"/>
</dbReference>
<dbReference type="GO" id="GO:0016743">
    <property type="term" value="F:carboxyl- or carbamoyltransferase activity"/>
    <property type="evidence" value="ECO:0007669"/>
    <property type="project" value="UniProtKB-UniRule"/>
</dbReference>
<dbReference type="GO" id="GO:0008270">
    <property type="term" value="F:zinc ion binding"/>
    <property type="evidence" value="ECO:0007669"/>
    <property type="project" value="UniProtKB-UniRule"/>
</dbReference>
<dbReference type="GO" id="GO:0006633">
    <property type="term" value="P:fatty acid biosynthetic process"/>
    <property type="evidence" value="ECO:0007669"/>
    <property type="project" value="UniProtKB-KW"/>
</dbReference>
<dbReference type="GO" id="GO:2001295">
    <property type="term" value="P:malonyl-CoA biosynthetic process"/>
    <property type="evidence" value="ECO:0007669"/>
    <property type="project" value="UniProtKB-UniRule"/>
</dbReference>
<dbReference type="Gene3D" id="3.90.226.10">
    <property type="entry name" value="2-enoyl-CoA Hydratase, Chain A, domain 1"/>
    <property type="match status" value="1"/>
</dbReference>
<dbReference type="HAMAP" id="MF_01395">
    <property type="entry name" value="AcetylCoA_CT_beta"/>
    <property type="match status" value="1"/>
</dbReference>
<dbReference type="InterPro" id="IPR034733">
    <property type="entry name" value="AcCoA_carboxyl_beta"/>
</dbReference>
<dbReference type="InterPro" id="IPR000438">
    <property type="entry name" value="Acetyl_CoA_COase_Trfase_b_su"/>
</dbReference>
<dbReference type="InterPro" id="IPR029045">
    <property type="entry name" value="ClpP/crotonase-like_dom_sf"/>
</dbReference>
<dbReference type="InterPro" id="IPR011762">
    <property type="entry name" value="COA_CT_N"/>
</dbReference>
<dbReference type="InterPro" id="IPR041010">
    <property type="entry name" value="Znf-ACC"/>
</dbReference>
<dbReference type="NCBIfam" id="TIGR00515">
    <property type="entry name" value="accD"/>
    <property type="match status" value="1"/>
</dbReference>
<dbReference type="PANTHER" id="PTHR42995">
    <property type="entry name" value="ACETYL-COENZYME A CARBOXYLASE CARBOXYL TRANSFERASE SUBUNIT BETA, CHLOROPLASTIC"/>
    <property type="match status" value="1"/>
</dbReference>
<dbReference type="PANTHER" id="PTHR42995:SF5">
    <property type="entry name" value="ACETYL-COENZYME A CARBOXYLASE CARBOXYL TRANSFERASE SUBUNIT BETA, CHLOROPLASTIC"/>
    <property type="match status" value="1"/>
</dbReference>
<dbReference type="Pfam" id="PF01039">
    <property type="entry name" value="Carboxyl_trans"/>
    <property type="match status" value="1"/>
</dbReference>
<dbReference type="Pfam" id="PF17848">
    <property type="entry name" value="Zn_ribbon_ACC"/>
    <property type="match status" value="1"/>
</dbReference>
<dbReference type="PRINTS" id="PR01070">
    <property type="entry name" value="ACCCTRFRASEB"/>
</dbReference>
<dbReference type="SUPFAM" id="SSF52096">
    <property type="entry name" value="ClpP/crotonase"/>
    <property type="match status" value="1"/>
</dbReference>
<dbReference type="PROSITE" id="PS50980">
    <property type="entry name" value="COA_CT_NTER"/>
    <property type="match status" value="1"/>
</dbReference>
<accession>A6U2G7</accession>
<gene>
    <name evidence="1" type="primary">accD</name>
    <name type="ordered locus">SaurJH1_1791</name>
</gene>
<keyword id="KW-0067">ATP-binding</keyword>
<keyword id="KW-0963">Cytoplasm</keyword>
<keyword id="KW-0275">Fatty acid biosynthesis</keyword>
<keyword id="KW-0276">Fatty acid metabolism</keyword>
<keyword id="KW-0444">Lipid biosynthesis</keyword>
<keyword id="KW-0443">Lipid metabolism</keyword>
<keyword id="KW-0479">Metal-binding</keyword>
<keyword id="KW-0547">Nucleotide-binding</keyword>
<keyword id="KW-0808">Transferase</keyword>
<keyword id="KW-0862">Zinc</keyword>
<keyword id="KW-0863">Zinc-finger</keyword>
<name>ACCD_STAA2</name>
<proteinExistence type="inferred from homology"/>
<evidence type="ECO:0000255" key="1">
    <source>
        <dbReference type="HAMAP-Rule" id="MF_01395"/>
    </source>
</evidence>
<evidence type="ECO:0000255" key="2">
    <source>
        <dbReference type="PROSITE-ProRule" id="PRU01136"/>
    </source>
</evidence>
<sequence length="285" mass="31872">MFKDFFNRTKKKKYLTVQDSKNNDVPAGIMTKCPKCKKIMYTKELAENLNVCFNCDHHIALTAYKRIEAISDEGSFTEFDKGMTSANPLDFPSYLEKIEKDQQKTGLKEAVVTGTAQLDGMKFGVAVMDSRFRMGSMGSVIGEKICRIIDYCTENRLPFILFSASGGARMQEGIISLMQMGKTSVSLKRHSDAGLLYISYLTHPTTGGVSASFASVGDINLSEPKALIGFAGRRVIEQTINEKLPDDFQTAEFLLEHGQLDKVVHRNDMRQTLSEILKIHQEVTK</sequence>
<organism>
    <name type="scientific">Staphylococcus aureus (strain JH1)</name>
    <dbReference type="NCBI Taxonomy" id="359787"/>
    <lineage>
        <taxon>Bacteria</taxon>
        <taxon>Bacillati</taxon>
        <taxon>Bacillota</taxon>
        <taxon>Bacilli</taxon>
        <taxon>Bacillales</taxon>
        <taxon>Staphylococcaceae</taxon>
        <taxon>Staphylococcus</taxon>
    </lineage>
</organism>
<comment type="function">
    <text evidence="1">Component of the acetyl coenzyme A carboxylase (ACC) complex. Biotin carboxylase (BC) catalyzes the carboxylation of biotin on its carrier protein (BCCP) and then the CO(2) group is transferred by the transcarboxylase to acetyl-CoA to form malonyl-CoA.</text>
</comment>
<comment type="catalytic activity">
    <reaction evidence="1">
        <text>N(6)-carboxybiotinyl-L-lysyl-[protein] + acetyl-CoA = N(6)-biotinyl-L-lysyl-[protein] + malonyl-CoA</text>
        <dbReference type="Rhea" id="RHEA:54728"/>
        <dbReference type="Rhea" id="RHEA-COMP:10505"/>
        <dbReference type="Rhea" id="RHEA-COMP:10506"/>
        <dbReference type="ChEBI" id="CHEBI:57288"/>
        <dbReference type="ChEBI" id="CHEBI:57384"/>
        <dbReference type="ChEBI" id="CHEBI:83144"/>
        <dbReference type="ChEBI" id="CHEBI:83145"/>
        <dbReference type="EC" id="2.1.3.15"/>
    </reaction>
</comment>
<comment type="cofactor">
    <cofactor evidence="1">
        <name>Zn(2+)</name>
        <dbReference type="ChEBI" id="CHEBI:29105"/>
    </cofactor>
    <text evidence="1">Binds 1 zinc ion per subunit.</text>
</comment>
<comment type="pathway">
    <text evidence="1">Lipid metabolism; malonyl-CoA biosynthesis; malonyl-CoA from acetyl-CoA: step 1/1.</text>
</comment>
<comment type="subunit">
    <text evidence="1">Acetyl-CoA carboxylase is a heterohexamer composed of biotin carboxyl carrier protein (AccB), biotin carboxylase (AccC) and two subunits each of ACCase subunit alpha (AccA) and ACCase subunit beta (AccD).</text>
</comment>
<comment type="subcellular location">
    <subcellularLocation>
        <location evidence="1">Cytoplasm</location>
    </subcellularLocation>
</comment>
<comment type="similarity">
    <text evidence="1">Belongs to the AccD/PCCB family.</text>
</comment>
<reference key="1">
    <citation type="submission" date="2007-06" db="EMBL/GenBank/DDBJ databases">
        <title>Complete sequence of chromosome of Staphylococcus aureus subsp. aureus JH1.</title>
        <authorList>
            <consortium name="US DOE Joint Genome Institute"/>
            <person name="Copeland A."/>
            <person name="Lucas S."/>
            <person name="Lapidus A."/>
            <person name="Barry K."/>
            <person name="Detter J.C."/>
            <person name="Glavina del Rio T."/>
            <person name="Hammon N."/>
            <person name="Israni S."/>
            <person name="Dalin E."/>
            <person name="Tice H."/>
            <person name="Pitluck S."/>
            <person name="Chain P."/>
            <person name="Malfatti S."/>
            <person name="Shin M."/>
            <person name="Vergez L."/>
            <person name="Schmutz J."/>
            <person name="Larimer F."/>
            <person name="Land M."/>
            <person name="Hauser L."/>
            <person name="Kyrpides N."/>
            <person name="Ivanova N."/>
            <person name="Tomasz A."/>
            <person name="Richardson P."/>
        </authorList>
    </citation>
    <scope>NUCLEOTIDE SEQUENCE [LARGE SCALE GENOMIC DNA]</scope>
    <source>
        <strain>JH1</strain>
    </source>
</reference>